<sequence>MTVVGNPRSWSCRWLPILILLLGTGHGPGVEGVTHYKAGDPVILYVNKVGPYHNPQETYHYYQLPVCCPEKIRHKSLSLGEVLDGDRMAESLYEIRFRENVEKRILCHMQLSSAQVEQLRQAIEELYYFEFVVDDLPIRGFVGYMEESGFLPHSHKIGLWTHLDFHLEFRGDRIIFANVSVRDVKPHSLDGLRPDEFLGLTHAYSVRWSETSVERRSDRRHGDDGGFFPRTLEIHWLSIINSMVLVFLLVGFVAVILMRVLRNDLARYNLDEETTSAGSGDDFDQGDNGWKIIHTDVFRFPPYRGLLCAVLGVGAQFLALGTGIIVMALLGMFNVHRHGAINSAAILLYALTCCISGYVSSHFYRQIGGERWVWNIILTTSLFSVPFFLTWSVVNSVHWANGSTQALPATTILLLLTVWLLVGFPLTVIGGIFGKNNASPFDAPCRTKNIAREIPPQPWYKSTVIHMTVGGFLPFSAISVELYYIFATVWGREQYTLYGILFFVFAILLSVGACISIALTYFQLSGEDYRWWWRSVLSVGSTGLFIFLYSVFYYARRSNMSGAVQTVEFFGYSLLTGYVFFLMLGTISFFSSLKFIRYIYVNLKMD</sequence>
<organism>
    <name type="scientific">Pongo abelii</name>
    <name type="common">Sumatran orangutan</name>
    <name type="synonym">Pongo pygmaeus abelii</name>
    <dbReference type="NCBI Taxonomy" id="9601"/>
    <lineage>
        <taxon>Eukaryota</taxon>
        <taxon>Metazoa</taxon>
        <taxon>Chordata</taxon>
        <taxon>Craniata</taxon>
        <taxon>Vertebrata</taxon>
        <taxon>Euteleostomi</taxon>
        <taxon>Mammalia</taxon>
        <taxon>Eutheria</taxon>
        <taxon>Euarchontoglires</taxon>
        <taxon>Primates</taxon>
        <taxon>Haplorrhini</taxon>
        <taxon>Catarrhini</taxon>
        <taxon>Hominidae</taxon>
        <taxon>Pongo</taxon>
    </lineage>
</organism>
<name>TM9S1_PONAB</name>
<proteinExistence type="evidence at transcript level"/>
<dbReference type="EMBL" id="CR859801">
    <property type="protein sequence ID" value="CAH91959.1"/>
    <property type="molecule type" value="mRNA"/>
</dbReference>
<dbReference type="RefSeq" id="NP_001126136.1">
    <property type="nucleotide sequence ID" value="NM_001132664.1"/>
</dbReference>
<dbReference type="SMR" id="Q5R8F1"/>
<dbReference type="FunCoup" id="Q5R8F1">
    <property type="interactions" value="688"/>
</dbReference>
<dbReference type="STRING" id="9601.ENSPPYP00000006469"/>
<dbReference type="GlyCosmos" id="Q5R8F1">
    <property type="glycosylation" value="3 sites, No reported glycans"/>
</dbReference>
<dbReference type="GeneID" id="100173093"/>
<dbReference type="KEGG" id="pon:100173093"/>
<dbReference type="CTD" id="10548"/>
<dbReference type="eggNOG" id="KOG1277">
    <property type="taxonomic scope" value="Eukaryota"/>
</dbReference>
<dbReference type="InParanoid" id="Q5R8F1"/>
<dbReference type="OrthoDB" id="1666796at2759"/>
<dbReference type="Proteomes" id="UP000001595">
    <property type="component" value="Unplaced"/>
</dbReference>
<dbReference type="GO" id="GO:0000421">
    <property type="term" value="C:autophagosome membrane"/>
    <property type="evidence" value="ECO:0007669"/>
    <property type="project" value="UniProtKB-SubCell"/>
</dbReference>
<dbReference type="GO" id="GO:0031410">
    <property type="term" value="C:cytoplasmic vesicle"/>
    <property type="evidence" value="ECO:0007669"/>
    <property type="project" value="UniProtKB-KW"/>
</dbReference>
<dbReference type="GO" id="GO:0005765">
    <property type="term" value="C:lysosomal membrane"/>
    <property type="evidence" value="ECO:0007669"/>
    <property type="project" value="UniProtKB-SubCell"/>
</dbReference>
<dbReference type="GO" id="GO:0006914">
    <property type="term" value="P:autophagy"/>
    <property type="evidence" value="ECO:0007669"/>
    <property type="project" value="UniProtKB-KW"/>
</dbReference>
<dbReference type="GO" id="GO:0072657">
    <property type="term" value="P:protein localization to membrane"/>
    <property type="evidence" value="ECO:0007669"/>
    <property type="project" value="TreeGrafter"/>
</dbReference>
<dbReference type="InterPro" id="IPR004240">
    <property type="entry name" value="EMP70"/>
</dbReference>
<dbReference type="PANTHER" id="PTHR10766:SF177">
    <property type="entry name" value="TRANSMEMBRANE 9 SUPERFAMILY MEMBER 1"/>
    <property type="match status" value="1"/>
</dbReference>
<dbReference type="PANTHER" id="PTHR10766">
    <property type="entry name" value="TRANSMEMBRANE 9 SUPERFAMILY PROTEIN"/>
    <property type="match status" value="1"/>
</dbReference>
<dbReference type="Pfam" id="PF02990">
    <property type="entry name" value="EMP70"/>
    <property type="match status" value="1"/>
</dbReference>
<gene>
    <name type="primary">TM9SF1</name>
</gene>
<comment type="function">
    <text evidence="1">Plays an essential role in autophagy.</text>
</comment>
<comment type="subcellular location">
    <subcellularLocation>
        <location>Lysosome membrane</location>
        <topology>Multi-pass membrane protein</topology>
    </subcellularLocation>
    <subcellularLocation>
        <location evidence="1">Cytoplasmic vesicle</location>
        <location evidence="1">Autophagosome membrane</location>
        <topology evidence="1">Multi-pass membrane protein</topology>
    </subcellularLocation>
</comment>
<comment type="similarity">
    <text evidence="3">Belongs to the nonaspanin (TM9SF) (TC 9.A.2) family.</text>
</comment>
<keyword id="KW-0072">Autophagy</keyword>
<keyword id="KW-0968">Cytoplasmic vesicle</keyword>
<keyword id="KW-0325">Glycoprotein</keyword>
<keyword id="KW-0458">Lysosome</keyword>
<keyword id="KW-0472">Membrane</keyword>
<keyword id="KW-1185">Reference proteome</keyword>
<keyword id="KW-0732">Signal</keyword>
<keyword id="KW-0812">Transmembrane</keyword>
<keyword id="KW-1133">Transmembrane helix</keyword>
<reference key="1">
    <citation type="submission" date="2004-11" db="EMBL/GenBank/DDBJ databases">
        <authorList>
            <consortium name="The German cDNA consortium"/>
        </authorList>
    </citation>
    <scope>NUCLEOTIDE SEQUENCE [LARGE SCALE MRNA]</scope>
    <source>
        <tissue>Kidney</tissue>
    </source>
</reference>
<feature type="signal peptide" evidence="2">
    <location>
        <begin position="1"/>
        <end position="27"/>
    </location>
</feature>
<feature type="chain" id="PRO_0000034363" description="Transmembrane 9 superfamily member 1">
    <location>
        <begin position="28"/>
        <end position="606"/>
    </location>
</feature>
<feature type="transmembrane region" description="Helical" evidence="2">
    <location>
        <begin position="237"/>
        <end position="257"/>
    </location>
</feature>
<feature type="transmembrane region" description="Helical" evidence="2">
    <location>
        <begin position="310"/>
        <end position="330"/>
    </location>
</feature>
<feature type="transmembrane region" description="Helical" evidence="2">
    <location>
        <begin position="339"/>
        <end position="359"/>
    </location>
</feature>
<feature type="transmembrane region" description="Helical" evidence="2">
    <location>
        <begin position="373"/>
        <end position="393"/>
    </location>
</feature>
<feature type="transmembrane region" description="Helical" evidence="2">
    <location>
        <begin position="412"/>
        <end position="432"/>
    </location>
</feature>
<feature type="transmembrane region" description="Helical" evidence="2">
    <location>
        <begin position="469"/>
        <end position="489"/>
    </location>
</feature>
<feature type="transmembrane region" description="Helical" evidence="2">
    <location>
        <begin position="499"/>
        <end position="519"/>
    </location>
</feature>
<feature type="transmembrane region" description="Helical" evidence="2">
    <location>
        <begin position="535"/>
        <end position="555"/>
    </location>
</feature>
<feature type="transmembrane region" description="Helical" evidence="2">
    <location>
        <begin position="570"/>
        <end position="590"/>
    </location>
</feature>
<feature type="glycosylation site" description="N-linked (GlcNAc...) asparagine" evidence="2">
    <location>
        <position position="178"/>
    </location>
</feature>
<feature type="glycosylation site" description="N-linked (GlcNAc...) asparagine" evidence="2">
    <location>
        <position position="401"/>
    </location>
</feature>
<feature type="glycosylation site" description="N-linked (GlcNAc...) asparagine" evidence="2">
    <location>
        <position position="559"/>
    </location>
</feature>
<protein>
    <recommendedName>
        <fullName>Transmembrane 9 superfamily member 1</fullName>
    </recommendedName>
</protein>
<accession>Q5R8F1</accession>
<evidence type="ECO:0000250" key="1"/>
<evidence type="ECO:0000255" key="2"/>
<evidence type="ECO:0000305" key="3"/>